<evidence type="ECO:0000255" key="1">
    <source>
        <dbReference type="HAMAP-Rule" id="MF_00194"/>
    </source>
</evidence>
<sequence>MWFKNLTLYRFNKPFSVDTEALETALADFTFSPCSSQDISKFGFSKALGKKGSALVHSAENRHLICVTKEEKILPGQVIKEALDEKVAEIEELENRKVTKKEKDTIKDEITTTLLPRAFSRRSQTHALILPEIEMILVDSSSATKAEELLALLRKALGSLPVIPLSFTTPIEQTLTQWLQAGESPLPFAMQDEAELKSDSDEGGIVRFKQQVLQEDEVLAHIATGKSVHKLALHFAQSIAFLMQSDASVKRLKFSEEFRANNDEVSGEDPLARLDADFALMGSELIAFVQALTQALGPMEESI</sequence>
<proteinExistence type="inferred from homology"/>
<reference key="1">
    <citation type="submission" date="2006-03" db="EMBL/GenBank/DDBJ databases">
        <title>Complete sequence of Shewanella denitrificans OS217.</title>
        <authorList>
            <consortium name="US DOE Joint Genome Institute"/>
            <person name="Copeland A."/>
            <person name="Lucas S."/>
            <person name="Lapidus A."/>
            <person name="Barry K."/>
            <person name="Detter J.C."/>
            <person name="Glavina del Rio T."/>
            <person name="Hammon N."/>
            <person name="Israni S."/>
            <person name="Dalin E."/>
            <person name="Tice H."/>
            <person name="Pitluck S."/>
            <person name="Brettin T."/>
            <person name="Bruce D."/>
            <person name="Han C."/>
            <person name="Tapia R."/>
            <person name="Gilna P."/>
            <person name="Kiss H."/>
            <person name="Schmutz J."/>
            <person name="Larimer F."/>
            <person name="Land M."/>
            <person name="Hauser L."/>
            <person name="Kyrpides N."/>
            <person name="Lykidis A."/>
            <person name="Richardson P."/>
        </authorList>
    </citation>
    <scope>NUCLEOTIDE SEQUENCE [LARGE SCALE GENOMIC DNA]</scope>
    <source>
        <strain>OS217 / ATCC BAA-1090 / DSM 15013</strain>
    </source>
</reference>
<protein>
    <recommendedName>
        <fullName evidence="1">Recombination-associated protein RdgC</fullName>
    </recommendedName>
</protein>
<gene>
    <name evidence="1" type="primary">rdgC</name>
    <name type="ordered locus">Sden_2691</name>
</gene>
<feature type="chain" id="PRO_1000021230" description="Recombination-associated protein RdgC">
    <location>
        <begin position="1"/>
        <end position="303"/>
    </location>
</feature>
<organism>
    <name type="scientific">Shewanella denitrificans (strain OS217 / ATCC BAA-1090 / DSM 15013)</name>
    <dbReference type="NCBI Taxonomy" id="318161"/>
    <lineage>
        <taxon>Bacteria</taxon>
        <taxon>Pseudomonadati</taxon>
        <taxon>Pseudomonadota</taxon>
        <taxon>Gammaproteobacteria</taxon>
        <taxon>Alteromonadales</taxon>
        <taxon>Shewanellaceae</taxon>
        <taxon>Shewanella</taxon>
    </lineage>
</organism>
<comment type="function">
    <text evidence="1">May be involved in recombination.</text>
</comment>
<comment type="subcellular location">
    <subcellularLocation>
        <location evidence="1">Cytoplasm</location>
        <location evidence="1">Nucleoid</location>
    </subcellularLocation>
</comment>
<comment type="similarity">
    <text evidence="1">Belongs to the RdgC family.</text>
</comment>
<dbReference type="EMBL" id="CP000302">
    <property type="protein sequence ID" value="ABE55970.1"/>
    <property type="molecule type" value="Genomic_DNA"/>
</dbReference>
<dbReference type="RefSeq" id="WP_011497121.1">
    <property type="nucleotide sequence ID" value="NC_007954.1"/>
</dbReference>
<dbReference type="SMR" id="Q12KQ6"/>
<dbReference type="STRING" id="318161.Sden_2691"/>
<dbReference type="KEGG" id="sdn:Sden_2691"/>
<dbReference type="eggNOG" id="COG2974">
    <property type="taxonomic scope" value="Bacteria"/>
</dbReference>
<dbReference type="HOGENOM" id="CLU_052038_1_1_6"/>
<dbReference type="OrthoDB" id="5290530at2"/>
<dbReference type="Proteomes" id="UP000001982">
    <property type="component" value="Chromosome"/>
</dbReference>
<dbReference type="GO" id="GO:0043590">
    <property type="term" value="C:bacterial nucleoid"/>
    <property type="evidence" value="ECO:0007669"/>
    <property type="project" value="TreeGrafter"/>
</dbReference>
<dbReference type="GO" id="GO:0005737">
    <property type="term" value="C:cytoplasm"/>
    <property type="evidence" value="ECO:0007669"/>
    <property type="project" value="UniProtKB-UniRule"/>
</dbReference>
<dbReference type="GO" id="GO:0003690">
    <property type="term" value="F:double-stranded DNA binding"/>
    <property type="evidence" value="ECO:0007669"/>
    <property type="project" value="TreeGrafter"/>
</dbReference>
<dbReference type="GO" id="GO:0006310">
    <property type="term" value="P:DNA recombination"/>
    <property type="evidence" value="ECO:0007669"/>
    <property type="project" value="UniProtKB-UniRule"/>
</dbReference>
<dbReference type="GO" id="GO:0000018">
    <property type="term" value="P:regulation of DNA recombination"/>
    <property type="evidence" value="ECO:0007669"/>
    <property type="project" value="TreeGrafter"/>
</dbReference>
<dbReference type="HAMAP" id="MF_00194">
    <property type="entry name" value="RdgC"/>
    <property type="match status" value="1"/>
</dbReference>
<dbReference type="InterPro" id="IPR007476">
    <property type="entry name" value="RdgC"/>
</dbReference>
<dbReference type="NCBIfam" id="NF001462">
    <property type="entry name" value="PRK00321.1-3"/>
    <property type="match status" value="1"/>
</dbReference>
<dbReference type="NCBIfam" id="NF001464">
    <property type="entry name" value="PRK00321.1-5"/>
    <property type="match status" value="1"/>
</dbReference>
<dbReference type="PANTHER" id="PTHR38103">
    <property type="entry name" value="RECOMBINATION-ASSOCIATED PROTEIN RDGC"/>
    <property type="match status" value="1"/>
</dbReference>
<dbReference type="PANTHER" id="PTHR38103:SF1">
    <property type="entry name" value="RECOMBINATION-ASSOCIATED PROTEIN RDGC"/>
    <property type="match status" value="1"/>
</dbReference>
<dbReference type="Pfam" id="PF04381">
    <property type="entry name" value="RdgC"/>
    <property type="match status" value="1"/>
</dbReference>
<keyword id="KW-0963">Cytoplasm</keyword>
<keyword id="KW-0233">DNA recombination</keyword>
<keyword id="KW-1185">Reference proteome</keyword>
<name>RDGC_SHEDO</name>
<accession>Q12KQ6</accession>